<organism>
    <name type="scientific">Haemophilus influenzae (strain ATCC 51907 / DSM 11121 / KW20 / Rd)</name>
    <dbReference type="NCBI Taxonomy" id="71421"/>
    <lineage>
        <taxon>Bacteria</taxon>
        <taxon>Pseudomonadati</taxon>
        <taxon>Pseudomonadota</taxon>
        <taxon>Gammaproteobacteria</taxon>
        <taxon>Pasteurellales</taxon>
        <taxon>Pasteurellaceae</taxon>
        <taxon>Haemophilus</taxon>
    </lineage>
</organism>
<keyword id="KW-0210">Decarboxylase</keyword>
<keyword id="KW-0456">Lyase</keyword>
<keyword id="KW-0663">Pyridoxal phosphate</keyword>
<keyword id="KW-1185">Reference proteome</keyword>
<sequence>MPNLKIAYSPKVEQYFSTNRELVEIAKTDFTDVAAIVLSSSDVGEYLDRIKATKFDVPVFIVQTDEQQVDPKFYDSIYHIQDLNGYDIKLYSRQIETAAKLYEEKMLPPFFKMLSEYVEMGNIAFDCPGHQGGQYYRKHPAGRFLYDFYGENIFRSDICNADVKLGDLLIHEGAACDAQKYAAQVFNADKTYFVLNGTSSSNKVALNAVLAPGDLVLFDRNNHKSNHHGALIQAGATPIYLETARNPFGFIGGIDSHCFEEDYLKSLIKEVAPEKLNQKRPFRLAVIQLGTYDGTIYNARQVVDKIGHLCDYILFDSAWVGYEQFIPMMKDCSPLLLELNENDPGILVTQSVHKQQAGFSQTSQIHKKDKHIKGQDRYVNHKRFNNAFMLHASTSPFYPLFATLDVNAKIQGSEAGRRLWHECVKVGIEARKLVLNHCELIRPFIPTTIKGKKWQDYDTEEIATNLEFFKFHPTDTWHKFEGYADEQYFVDPCKFLLTTPGISLETGEYEEFGVPATILANYLRENGIIPEKCDLNSILFLLTPAETITKMQTLVAQIALFEKHIKQDSLLKYVLPTVYKNNEDRYKGYTIRQLCQEMHDLYVSRNVKQLQKDLFRKATLPEYVLNPHDANIELIRNKVELVPLTDIVGRVAAEGALPYPPGVLCVVPGEKWSTTAHQYFLALEEGINTLPGFAPEIQGVYLQKDPDGRTRAYGYVLTDY</sequence>
<accession>P44317</accession>
<reference key="1">
    <citation type="journal article" date="1995" name="Science">
        <title>Whole-genome random sequencing and assembly of Haemophilus influenzae Rd.</title>
        <authorList>
            <person name="Fleischmann R.D."/>
            <person name="Adams M.D."/>
            <person name="White O."/>
            <person name="Clayton R.A."/>
            <person name="Kirkness E.F."/>
            <person name="Kerlavage A.R."/>
            <person name="Bult C.J."/>
            <person name="Tomb J.-F."/>
            <person name="Dougherty B.A."/>
            <person name="Merrick J.M."/>
            <person name="McKenney K."/>
            <person name="Sutton G.G."/>
            <person name="FitzHugh W."/>
            <person name="Fields C.A."/>
            <person name="Gocayne J.D."/>
            <person name="Scott J.D."/>
            <person name="Shirley R."/>
            <person name="Liu L.-I."/>
            <person name="Glodek A."/>
            <person name="Kelley J.M."/>
            <person name="Weidman J.F."/>
            <person name="Phillips C.A."/>
            <person name="Spriggs T."/>
            <person name="Hedblom E."/>
            <person name="Cotton M.D."/>
            <person name="Utterback T.R."/>
            <person name="Hanna M.C."/>
            <person name="Nguyen D.T."/>
            <person name="Saudek D.M."/>
            <person name="Brandon R.C."/>
            <person name="Fine L.D."/>
            <person name="Fritchman J.L."/>
            <person name="Fuhrmann J.L."/>
            <person name="Geoghagen N.S.M."/>
            <person name="Gnehm C.L."/>
            <person name="McDonald L.A."/>
            <person name="Small K.V."/>
            <person name="Fraser C.M."/>
            <person name="Smith H.O."/>
            <person name="Venter J.C."/>
        </authorList>
    </citation>
    <scope>NUCLEOTIDE SEQUENCE [LARGE SCALE GENOMIC DNA]</scope>
    <source>
        <strain>ATCC 51907 / DSM 11121 / KW20 / Rd</strain>
    </source>
</reference>
<gene>
    <name type="primary">speF</name>
    <name type="ordered locus">HI_0591</name>
</gene>
<feature type="chain" id="PRO_0000201136" description="Ornithine decarboxylase">
    <location>
        <begin position="1"/>
        <end position="720"/>
    </location>
</feature>
<feature type="modified residue" description="N6-(pyridoxal phosphate)lysine" evidence="1">
    <location>
        <position position="354"/>
    </location>
</feature>
<comment type="catalytic activity">
    <reaction>
        <text>L-ornithine + H(+) = putrescine + CO2</text>
        <dbReference type="Rhea" id="RHEA:22964"/>
        <dbReference type="ChEBI" id="CHEBI:15378"/>
        <dbReference type="ChEBI" id="CHEBI:16526"/>
        <dbReference type="ChEBI" id="CHEBI:46911"/>
        <dbReference type="ChEBI" id="CHEBI:326268"/>
        <dbReference type="EC" id="4.1.1.17"/>
    </reaction>
</comment>
<comment type="cofactor">
    <cofactor evidence="1">
        <name>pyridoxal 5'-phosphate</name>
        <dbReference type="ChEBI" id="CHEBI:597326"/>
    </cofactor>
</comment>
<comment type="similarity">
    <text evidence="2">Belongs to the Orn/Lys/Arg decarboxylase class-I family.</text>
</comment>
<name>DCOR_HAEIN</name>
<proteinExistence type="inferred from homology"/>
<protein>
    <recommendedName>
        <fullName>Ornithine decarboxylase</fullName>
        <ecNumber>4.1.1.17</ecNumber>
    </recommendedName>
</protein>
<dbReference type="EC" id="4.1.1.17"/>
<dbReference type="EMBL" id="L42023">
    <property type="protein sequence ID" value="AAC22248.1"/>
    <property type="molecule type" value="Genomic_DNA"/>
</dbReference>
<dbReference type="PIR" id="F64079">
    <property type="entry name" value="F64079"/>
</dbReference>
<dbReference type="RefSeq" id="NP_438749.1">
    <property type="nucleotide sequence ID" value="NC_000907.1"/>
</dbReference>
<dbReference type="SMR" id="P44317"/>
<dbReference type="STRING" id="71421.HI_0591"/>
<dbReference type="EnsemblBacteria" id="AAC22248">
    <property type="protein sequence ID" value="AAC22248"/>
    <property type="gene ID" value="HI_0591"/>
</dbReference>
<dbReference type="KEGG" id="hin:HI_0591"/>
<dbReference type="PATRIC" id="fig|71421.8.peg.614"/>
<dbReference type="eggNOG" id="COG1982">
    <property type="taxonomic scope" value="Bacteria"/>
</dbReference>
<dbReference type="HOGENOM" id="CLU_014292_3_0_6"/>
<dbReference type="OrthoDB" id="9761189at2"/>
<dbReference type="PhylomeDB" id="P44317"/>
<dbReference type="BioCyc" id="HINF71421:G1GJ1-603-MONOMER"/>
<dbReference type="Proteomes" id="UP000000579">
    <property type="component" value="Chromosome"/>
</dbReference>
<dbReference type="GO" id="GO:0005829">
    <property type="term" value="C:cytosol"/>
    <property type="evidence" value="ECO:0000318"/>
    <property type="project" value="GO_Central"/>
</dbReference>
<dbReference type="GO" id="GO:0016831">
    <property type="term" value="F:carboxy-lyase activity"/>
    <property type="evidence" value="ECO:0000318"/>
    <property type="project" value="GO_Central"/>
</dbReference>
<dbReference type="GO" id="GO:0004586">
    <property type="term" value="F:ornithine decarboxylase activity"/>
    <property type="evidence" value="ECO:0007669"/>
    <property type="project" value="UniProtKB-EC"/>
</dbReference>
<dbReference type="GO" id="GO:0030170">
    <property type="term" value="F:pyridoxal phosphate binding"/>
    <property type="evidence" value="ECO:0000318"/>
    <property type="project" value="GO_Central"/>
</dbReference>
<dbReference type="GO" id="GO:0006520">
    <property type="term" value="P:amino acid metabolic process"/>
    <property type="evidence" value="ECO:0007669"/>
    <property type="project" value="InterPro"/>
</dbReference>
<dbReference type="CDD" id="cd00615">
    <property type="entry name" value="Orn_deC_like"/>
    <property type="match status" value="1"/>
</dbReference>
<dbReference type="FunFam" id="3.40.640.10:FF:000008">
    <property type="entry name" value="Lysine decarboxylase, inducible"/>
    <property type="match status" value="1"/>
</dbReference>
<dbReference type="FunFam" id="3.90.1150.10:FF:000032">
    <property type="entry name" value="Ornithine decarboxylase SpeF"/>
    <property type="match status" value="1"/>
</dbReference>
<dbReference type="Gene3D" id="3.40.50.220">
    <property type="match status" value="1"/>
</dbReference>
<dbReference type="Gene3D" id="3.90.1150.10">
    <property type="entry name" value="Aspartate Aminotransferase, domain 1"/>
    <property type="match status" value="1"/>
</dbReference>
<dbReference type="Gene3D" id="3.90.100.10">
    <property type="entry name" value="Orn/Lys/Arg decarboxylase, C-terminal domain"/>
    <property type="match status" value="1"/>
</dbReference>
<dbReference type="Gene3D" id="3.40.640.10">
    <property type="entry name" value="Type I PLP-dependent aspartate aminotransferase-like (Major domain)"/>
    <property type="match status" value="1"/>
</dbReference>
<dbReference type="InterPro" id="IPR011006">
    <property type="entry name" value="CheY-like_superfamily"/>
</dbReference>
<dbReference type="InterPro" id="IPR027568">
    <property type="entry name" value="ODC_inducible"/>
</dbReference>
<dbReference type="InterPro" id="IPR005308">
    <property type="entry name" value="OKR_de-COase_N"/>
</dbReference>
<dbReference type="InterPro" id="IPR011193">
    <property type="entry name" value="Orn/lys/arg_de-COase"/>
</dbReference>
<dbReference type="InterPro" id="IPR000310">
    <property type="entry name" value="Orn/Lys/Arg_deCO2ase_major_dom"/>
</dbReference>
<dbReference type="InterPro" id="IPR027464">
    <property type="entry name" value="Ornithine_deCO2ase_N"/>
</dbReference>
<dbReference type="InterPro" id="IPR008286">
    <property type="entry name" value="Prn/Lys/Arg_de-COase_C"/>
</dbReference>
<dbReference type="InterPro" id="IPR036633">
    <property type="entry name" value="Prn/Lys/Arg_de-COase_C_sf"/>
</dbReference>
<dbReference type="InterPro" id="IPR015424">
    <property type="entry name" value="PyrdxlP-dep_Trfase"/>
</dbReference>
<dbReference type="InterPro" id="IPR015421">
    <property type="entry name" value="PyrdxlP-dep_Trfase_major"/>
</dbReference>
<dbReference type="InterPro" id="IPR015422">
    <property type="entry name" value="PyrdxlP-dep_Trfase_small"/>
</dbReference>
<dbReference type="NCBIfam" id="TIGR04301">
    <property type="entry name" value="ODC_inducible"/>
    <property type="match status" value="1"/>
</dbReference>
<dbReference type="NCBIfam" id="NF010092">
    <property type="entry name" value="PRK13578.1"/>
    <property type="match status" value="1"/>
</dbReference>
<dbReference type="PANTHER" id="PTHR45229:SF3">
    <property type="entry name" value="BIODEGRADATIVE ARGININE DECARBOXYLASE"/>
    <property type="match status" value="1"/>
</dbReference>
<dbReference type="PANTHER" id="PTHR45229">
    <property type="entry name" value="CONSTITUTIVE ORNITHINE DECARBOXYLASE"/>
    <property type="match status" value="1"/>
</dbReference>
<dbReference type="Pfam" id="PF01276">
    <property type="entry name" value="OKR_DC_1"/>
    <property type="match status" value="1"/>
</dbReference>
<dbReference type="Pfam" id="PF03711">
    <property type="entry name" value="OKR_DC_1_C"/>
    <property type="match status" value="1"/>
</dbReference>
<dbReference type="Pfam" id="PF03709">
    <property type="entry name" value="OKR_DC_1_N"/>
    <property type="match status" value="1"/>
</dbReference>
<dbReference type="PIRSF" id="PIRSF009393">
    <property type="entry name" value="Orn_decarb"/>
    <property type="match status" value="1"/>
</dbReference>
<dbReference type="SUPFAM" id="SSF52172">
    <property type="entry name" value="CheY-like"/>
    <property type="match status" value="1"/>
</dbReference>
<dbReference type="SUPFAM" id="SSF55904">
    <property type="entry name" value="Ornithine decarboxylase C-terminal domain"/>
    <property type="match status" value="1"/>
</dbReference>
<dbReference type="SUPFAM" id="SSF53383">
    <property type="entry name" value="PLP-dependent transferases"/>
    <property type="match status" value="1"/>
</dbReference>
<dbReference type="PROSITE" id="PS00703">
    <property type="entry name" value="OKR_DC_1"/>
    <property type="match status" value="1"/>
</dbReference>
<evidence type="ECO:0000250" key="1"/>
<evidence type="ECO:0000305" key="2"/>